<dbReference type="EC" id="7.1.2.2" evidence="1"/>
<dbReference type="EMBL" id="CP001403">
    <property type="protein sequence ID" value="ACP45832.1"/>
    <property type="molecule type" value="Genomic_DNA"/>
</dbReference>
<dbReference type="RefSeq" id="WP_012716223.1">
    <property type="nucleotide sequence ID" value="NC_012622.1"/>
</dbReference>
<dbReference type="SMR" id="C3NEU3"/>
<dbReference type="GeneID" id="7806081"/>
<dbReference type="KEGG" id="siy:YG5714_1570"/>
<dbReference type="HOGENOM" id="CLU_008162_3_1_2"/>
<dbReference type="Proteomes" id="UP000002308">
    <property type="component" value="Chromosome"/>
</dbReference>
<dbReference type="GO" id="GO:0005886">
    <property type="term" value="C:plasma membrane"/>
    <property type="evidence" value="ECO:0007669"/>
    <property type="project" value="UniProtKB-SubCell"/>
</dbReference>
<dbReference type="GO" id="GO:0033178">
    <property type="term" value="C:proton-transporting two-sector ATPase complex, catalytic domain"/>
    <property type="evidence" value="ECO:0007669"/>
    <property type="project" value="InterPro"/>
</dbReference>
<dbReference type="GO" id="GO:0005524">
    <property type="term" value="F:ATP binding"/>
    <property type="evidence" value="ECO:0007669"/>
    <property type="project" value="UniProtKB-UniRule"/>
</dbReference>
<dbReference type="GO" id="GO:0016887">
    <property type="term" value="F:ATP hydrolysis activity"/>
    <property type="evidence" value="ECO:0007669"/>
    <property type="project" value="InterPro"/>
</dbReference>
<dbReference type="GO" id="GO:0046933">
    <property type="term" value="F:proton-transporting ATP synthase activity, rotational mechanism"/>
    <property type="evidence" value="ECO:0007669"/>
    <property type="project" value="UniProtKB-UniRule"/>
</dbReference>
<dbReference type="GO" id="GO:0046961">
    <property type="term" value="F:proton-transporting ATPase activity, rotational mechanism"/>
    <property type="evidence" value="ECO:0007669"/>
    <property type="project" value="InterPro"/>
</dbReference>
<dbReference type="GO" id="GO:0042777">
    <property type="term" value="P:proton motive force-driven plasma membrane ATP synthesis"/>
    <property type="evidence" value="ECO:0007669"/>
    <property type="project" value="UniProtKB-UniRule"/>
</dbReference>
<dbReference type="CDD" id="cd18111">
    <property type="entry name" value="ATP-synt_V_A-type_alpha_C"/>
    <property type="match status" value="1"/>
</dbReference>
<dbReference type="CDD" id="cd18119">
    <property type="entry name" value="ATP-synt_V_A-type_alpha_N"/>
    <property type="match status" value="1"/>
</dbReference>
<dbReference type="CDD" id="cd01134">
    <property type="entry name" value="V_A-ATPase_A"/>
    <property type="match status" value="1"/>
</dbReference>
<dbReference type="FunFam" id="1.10.1140.10:FF:000002">
    <property type="entry name" value="V-type proton ATPase catalytic subunit A"/>
    <property type="match status" value="1"/>
</dbReference>
<dbReference type="FunFam" id="2.40.30.20:FF:000002">
    <property type="entry name" value="V-type proton ATPase catalytic subunit A"/>
    <property type="match status" value="1"/>
</dbReference>
<dbReference type="FunFam" id="2.40.50.100:FF:000008">
    <property type="entry name" value="V-type proton ATPase catalytic subunit A"/>
    <property type="match status" value="1"/>
</dbReference>
<dbReference type="Gene3D" id="2.40.30.20">
    <property type="match status" value="1"/>
</dbReference>
<dbReference type="Gene3D" id="2.40.50.100">
    <property type="match status" value="1"/>
</dbReference>
<dbReference type="Gene3D" id="1.10.1140.10">
    <property type="entry name" value="Bovine Mitochondrial F1-atpase, Atp Synthase Beta Chain, Chain D, domain 3"/>
    <property type="match status" value="1"/>
</dbReference>
<dbReference type="Gene3D" id="3.40.50.300">
    <property type="entry name" value="P-loop containing nucleotide triphosphate hydrolases"/>
    <property type="match status" value="1"/>
</dbReference>
<dbReference type="HAMAP" id="MF_00309">
    <property type="entry name" value="ATP_synth_A_arch"/>
    <property type="match status" value="1"/>
</dbReference>
<dbReference type="InterPro" id="IPR003593">
    <property type="entry name" value="AAA+_ATPase"/>
</dbReference>
<dbReference type="InterPro" id="IPR055190">
    <property type="entry name" value="ATP-synt_VA_C"/>
</dbReference>
<dbReference type="InterPro" id="IPR031686">
    <property type="entry name" value="ATP-synth_a_Xtn"/>
</dbReference>
<dbReference type="InterPro" id="IPR023366">
    <property type="entry name" value="ATP_synth_asu-like_sf"/>
</dbReference>
<dbReference type="InterPro" id="IPR005726">
    <property type="entry name" value="ATP_synth_asu_arc"/>
</dbReference>
<dbReference type="InterPro" id="IPR004100">
    <property type="entry name" value="ATPase_F1/V1/A1_a/bsu_N"/>
</dbReference>
<dbReference type="InterPro" id="IPR036121">
    <property type="entry name" value="ATPase_F1/V1/A1_a/bsu_N_sf"/>
</dbReference>
<dbReference type="InterPro" id="IPR000194">
    <property type="entry name" value="ATPase_F1/V1/A1_a/bsu_nucl-bd"/>
</dbReference>
<dbReference type="InterPro" id="IPR024034">
    <property type="entry name" value="ATPase_F1/V1_b/a_C"/>
</dbReference>
<dbReference type="InterPro" id="IPR027417">
    <property type="entry name" value="P-loop_NTPase"/>
</dbReference>
<dbReference type="InterPro" id="IPR022878">
    <property type="entry name" value="V-ATPase_asu"/>
</dbReference>
<dbReference type="NCBIfam" id="TIGR01043">
    <property type="entry name" value="ATP_syn_A_arch"/>
    <property type="match status" value="1"/>
</dbReference>
<dbReference type="NCBIfam" id="NF003220">
    <property type="entry name" value="PRK04192.1"/>
    <property type="match status" value="1"/>
</dbReference>
<dbReference type="PANTHER" id="PTHR43607:SF1">
    <property type="entry name" value="H(+)-TRANSPORTING TWO-SECTOR ATPASE"/>
    <property type="match status" value="1"/>
</dbReference>
<dbReference type="PANTHER" id="PTHR43607">
    <property type="entry name" value="V-TYPE PROTON ATPASE CATALYTIC SUBUNIT A"/>
    <property type="match status" value="1"/>
</dbReference>
<dbReference type="Pfam" id="PF00006">
    <property type="entry name" value="ATP-synt_ab"/>
    <property type="match status" value="1"/>
</dbReference>
<dbReference type="Pfam" id="PF02874">
    <property type="entry name" value="ATP-synt_ab_N"/>
    <property type="match status" value="1"/>
</dbReference>
<dbReference type="Pfam" id="PF16886">
    <property type="entry name" value="ATP-synt_ab_Xtn"/>
    <property type="match status" value="1"/>
</dbReference>
<dbReference type="Pfam" id="PF22919">
    <property type="entry name" value="ATP-synt_VA_C"/>
    <property type="match status" value="1"/>
</dbReference>
<dbReference type="SMART" id="SM00382">
    <property type="entry name" value="AAA"/>
    <property type="match status" value="1"/>
</dbReference>
<dbReference type="SUPFAM" id="SSF47917">
    <property type="entry name" value="C-terminal domain of alpha and beta subunits of F1 ATP synthase"/>
    <property type="match status" value="1"/>
</dbReference>
<dbReference type="SUPFAM" id="SSF50615">
    <property type="entry name" value="N-terminal domain of alpha and beta subunits of F1 ATP synthase"/>
    <property type="match status" value="1"/>
</dbReference>
<dbReference type="SUPFAM" id="SSF52540">
    <property type="entry name" value="P-loop containing nucleoside triphosphate hydrolases"/>
    <property type="match status" value="1"/>
</dbReference>
<sequence length="592" mass="66454">MNNGRIVRINGPLVVADNMKNAQMYEVVEVGEPRLIGEITRIEGDRAFIQVYEDTSGIKPNEPVYRTGAPLSIELGPGLIGKIFDGLQRPLDSIKELTKSPFIARGIKVPSVDRKTKWHFIPKVKKGDKIEGGDIIGIVNETPLVEHRILVPPYVHGTLKEIVAEGDYTVEDPIAVVDMNGDEAPIRLMQRWPVRIPRPFREKLEPTEPLLTGTRVLDTIFPIAKGGTAAIPGPFGSGKTVTLQSLAKWSAAKIVIYVGCGERGNEMTDELRQFPSLKDPWTGRPLLERTILVANTSNMPVAAREASIYVGITMAEYFRDQGYDTLLVADSTSRWAEALRDLGGRMEEMPAEEGFPSYLPSRLAEYYERAGRVKTVGKPERFGSVTVASAVSPPGGDFTEPVTSQTLRFVKVFWPLDVSLAQARHYPAINWLQGFSAYVDLVANWWNTNVDPKWREMRDMMVRTLIREDELRQIVRLVGPESLAEKDKLVLETARLIKEAFLKQNAYDDIDAFSSPQKQARVMRLIYLFNTHASRLVERGIPTKKIVDSMGQLLPEIIRSKAAIKNDELNKYDELERKLINVFENLEKEAGT</sequence>
<keyword id="KW-0066">ATP synthesis</keyword>
<keyword id="KW-0067">ATP-binding</keyword>
<keyword id="KW-1003">Cell membrane</keyword>
<keyword id="KW-0375">Hydrogen ion transport</keyword>
<keyword id="KW-0406">Ion transport</keyword>
<keyword id="KW-0472">Membrane</keyword>
<keyword id="KW-0547">Nucleotide-binding</keyword>
<keyword id="KW-1278">Translocase</keyword>
<keyword id="KW-0813">Transport</keyword>
<name>AATA_SACI7</name>
<proteinExistence type="inferred from homology"/>
<gene>
    <name evidence="1" type="primary">atpA</name>
    <name type="ordered locus">YG5714_1570</name>
</gene>
<organism>
    <name type="scientific">Saccharolobus islandicus (strain Y.G.57.14 / Yellowstone #1)</name>
    <name type="common">Sulfolobus islandicus</name>
    <dbReference type="NCBI Taxonomy" id="439386"/>
    <lineage>
        <taxon>Archaea</taxon>
        <taxon>Thermoproteota</taxon>
        <taxon>Thermoprotei</taxon>
        <taxon>Sulfolobales</taxon>
        <taxon>Sulfolobaceae</taxon>
        <taxon>Saccharolobus</taxon>
    </lineage>
</organism>
<protein>
    <recommendedName>
        <fullName evidence="1">A-type ATP synthase subunit A</fullName>
        <ecNumber evidence="1">7.1.2.2</ecNumber>
    </recommendedName>
</protein>
<evidence type="ECO:0000255" key="1">
    <source>
        <dbReference type="HAMAP-Rule" id="MF_00309"/>
    </source>
</evidence>
<reference key="1">
    <citation type="journal article" date="2009" name="Proc. Natl. Acad. Sci. U.S.A.">
        <title>Biogeography of the Sulfolobus islandicus pan-genome.</title>
        <authorList>
            <person name="Reno M.L."/>
            <person name="Held N.L."/>
            <person name="Fields C.J."/>
            <person name="Burke P.V."/>
            <person name="Whitaker R.J."/>
        </authorList>
    </citation>
    <scope>NUCLEOTIDE SEQUENCE [LARGE SCALE GENOMIC DNA]</scope>
    <source>
        <strain>Y.G.57.14 / Yellowstone #1</strain>
    </source>
</reference>
<accession>C3NEU3</accession>
<feature type="chain" id="PRO_1000205037" description="A-type ATP synthase subunit A">
    <location>
        <begin position="1"/>
        <end position="592"/>
    </location>
</feature>
<feature type="binding site" evidence="1">
    <location>
        <begin position="233"/>
        <end position="240"/>
    </location>
    <ligand>
        <name>ATP</name>
        <dbReference type="ChEBI" id="CHEBI:30616"/>
    </ligand>
</feature>
<comment type="function">
    <text evidence="1">Component of the A-type ATP synthase that produces ATP from ADP in the presence of a proton gradient across the membrane. The A chain is the catalytic subunit.</text>
</comment>
<comment type="catalytic activity">
    <reaction evidence="1">
        <text>ATP + H2O + 4 H(+)(in) = ADP + phosphate + 5 H(+)(out)</text>
        <dbReference type="Rhea" id="RHEA:57720"/>
        <dbReference type="ChEBI" id="CHEBI:15377"/>
        <dbReference type="ChEBI" id="CHEBI:15378"/>
        <dbReference type="ChEBI" id="CHEBI:30616"/>
        <dbReference type="ChEBI" id="CHEBI:43474"/>
        <dbReference type="ChEBI" id="CHEBI:456216"/>
        <dbReference type="EC" id="7.1.2.2"/>
    </reaction>
</comment>
<comment type="subunit">
    <text evidence="1">Has multiple subunits with at least A(3), B(3), C, D, E, F, H, I and proteolipid K(x).</text>
</comment>
<comment type="subcellular location">
    <subcellularLocation>
        <location evidence="1">Cell membrane</location>
        <topology evidence="1">Peripheral membrane protein</topology>
    </subcellularLocation>
</comment>
<comment type="similarity">
    <text evidence="1">Belongs to the ATPase alpha/beta chains family.</text>
</comment>